<organism>
    <name type="scientific">Pseudomonas aeruginosa (strain LESB58)</name>
    <dbReference type="NCBI Taxonomy" id="557722"/>
    <lineage>
        <taxon>Bacteria</taxon>
        <taxon>Pseudomonadati</taxon>
        <taxon>Pseudomonadota</taxon>
        <taxon>Gammaproteobacteria</taxon>
        <taxon>Pseudomonadales</taxon>
        <taxon>Pseudomonadaceae</taxon>
        <taxon>Pseudomonas</taxon>
    </lineage>
</organism>
<reference key="1">
    <citation type="journal article" date="2009" name="Genome Res.">
        <title>Newly introduced genomic prophage islands are critical determinants of in vivo competitiveness in the Liverpool epidemic strain of Pseudomonas aeruginosa.</title>
        <authorList>
            <person name="Winstanley C."/>
            <person name="Langille M.G.I."/>
            <person name="Fothergill J.L."/>
            <person name="Kukavica-Ibrulj I."/>
            <person name="Paradis-Bleau C."/>
            <person name="Sanschagrin F."/>
            <person name="Thomson N.R."/>
            <person name="Winsor G.L."/>
            <person name="Quail M.A."/>
            <person name="Lennard N."/>
            <person name="Bignell A."/>
            <person name="Clarke L."/>
            <person name="Seeger K."/>
            <person name="Saunders D."/>
            <person name="Harris D."/>
            <person name="Parkhill J."/>
            <person name="Hancock R.E.W."/>
            <person name="Brinkman F.S.L."/>
            <person name="Levesque R.C."/>
        </authorList>
    </citation>
    <scope>NUCLEOTIDE SEQUENCE [LARGE SCALE GENOMIC DNA]</scope>
    <source>
        <strain>LESB58</strain>
    </source>
</reference>
<proteinExistence type="inferred from homology"/>
<sequence>MVDKLTHLKQLEAESIHIIREVAAEFDNPVMLYSIGKDSAVMLHLARKAFFPGKLPFPVMHVDTRWKFQEMYRFRDRMVEEMGLDLITHVNPDGVAQGINPFTHGSAKHTDVMKTEGLKQALDKYGFDAAFGGARRDEEKSRAKERVYSFRDSKHRWDPKNQRPELWNIYNGKVKKGESIRVFPLSNWTELDIWQYIYLEGIPIVPLYFAAEREVIEKNGTLIMIDDERILEHLSDEEKARIEKRMVRFRTLGCYPLTGAVESSATTLPEIIQEMLLTRTSERQGRVIDHDQAGSMEEKKRQGYF</sequence>
<feature type="chain" id="PRO_1000116962" description="Sulfate adenylyltransferase subunit 2">
    <location>
        <begin position="1"/>
        <end position="305"/>
    </location>
</feature>
<name>CYSD_PSEA8</name>
<gene>
    <name evidence="1" type="primary">cysD</name>
    <name type="ordered locus">PLES_48221</name>
</gene>
<comment type="function">
    <text evidence="1">With CysN forms the ATP sulfurylase (ATPS) that catalyzes the adenylation of sulfate producing adenosine 5'-phosphosulfate (APS) and diphosphate, the first enzymatic step in sulfur assimilation pathway. APS synthesis involves the formation of a high-energy phosphoric-sulfuric acid anhydride bond driven by GTP hydrolysis by CysN coupled to ATP hydrolysis by CysD.</text>
</comment>
<comment type="catalytic activity">
    <reaction evidence="1">
        <text>sulfate + ATP + H(+) = adenosine 5'-phosphosulfate + diphosphate</text>
        <dbReference type="Rhea" id="RHEA:18133"/>
        <dbReference type="ChEBI" id="CHEBI:15378"/>
        <dbReference type="ChEBI" id="CHEBI:16189"/>
        <dbReference type="ChEBI" id="CHEBI:30616"/>
        <dbReference type="ChEBI" id="CHEBI:33019"/>
        <dbReference type="ChEBI" id="CHEBI:58243"/>
        <dbReference type="EC" id="2.7.7.4"/>
    </reaction>
</comment>
<comment type="pathway">
    <text evidence="1">Sulfur metabolism; hydrogen sulfide biosynthesis; sulfite from sulfate: step 1/3.</text>
</comment>
<comment type="subunit">
    <text evidence="1">Heterodimer composed of CysD, the smaller subunit, and CysN.</text>
</comment>
<comment type="similarity">
    <text evidence="1">Belongs to the PAPS reductase family. CysD subfamily.</text>
</comment>
<protein>
    <recommendedName>
        <fullName evidence="1">Sulfate adenylyltransferase subunit 2</fullName>
        <ecNumber evidence="1">2.7.7.4</ecNumber>
    </recommendedName>
    <alternativeName>
        <fullName evidence="1">ATP-sulfurylase small subunit</fullName>
    </alternativeName>
    <alternativeName>
        <fullName evidence="1">Sulfate adenylate transferase</fullName>
        <shortName evidence="1">SAT</shortName>
    </alternativeName>
</protein>
<accession>B7UZY2</accession>
<dbReference type="EC" id="2.7.7.4" evidence="1"/>
<dbReference type="EMBL" id="FM209186">
    <property type="protein sequence ID" value="CAW29576.1"/>
    <property type="molecule type" value="Genomic_DNA"/>
</dbReference>
<dbReference type="RefSeq" id="WP_003094311.1">
    <property type="nucleotide sequence ID" value="NC_011770.1"/>
</dbReference>
<dbReference type="SMR" id="B7UZY2"/>
<dbReference type="KEGG" id="pag:PLES_48221"/>
<dbReference type="HOGENOM" id="CLU_043026_0_0_6"/>
<dbReference type="UniPathway" id="UPA00140">
    <property type="reaction ID" value="UER00204"/>
</dbReference>
<dbReference type="GO" id="GO:0005524">
    <property type="term" value="F:ATP binding"/>
    <property type="evidence" value="ECO:0007669"/>
    <property type="project" value="UniProtKB-KW"/>
</dbReference>
<dbReference type="GO" id="GO:0004781">
    <property type="term" value="F:sulfate adenylyltransferase (ATP) activity"/>
    <property type="evidence" value="ECO:0007669"/>
    <property type="project" value="UniProtKB-UniRule"/>
</dbReference>
<dbReference type="GO" id="GO:0070814">
    <property type="term" value="P:hydrogen sulfide biosynthetic process"/>
    <property type="evidence" value="ECO:0007669"/>
    <property type="project" value="UniProtKB-UniRule"/>
</dbReference>
<dbReference type="GO" id="GO:0000103">
    <property type="term" value="P:sulfate assimilation"/>
    <property type="evidence" value="ECO:0007669"/>
    <property type="project" value="UniProtKB-UniRule"/>
</dbReference>
<dbReference type="CDD" id="cd23946">
    <property type="entry name" value="Sulfate_adenylyltransferase_2"/>
    <property type="match status" value="1"/>
</dbReference>
<dbReference type="FunFam" id="3.40.50.620:FF:000002">
    <property type="entry name" value="Sulfate adenylyltransferase subunit 2"/>
    <property type="match status" value="1"/>
</dbReference>
<dbReference type="Gene3D" id="3.40.50.620">
    <property type="entry name" value="HUPs"/>
    <property type="match status" value="1"/>
</dbReference>
<dbReference type="HAMAP" id="MF_00064">
    <property type="entry name" value="Sulf_adenylyltr_sub2"/>
    <property type="match status" value="1"/>
</dbReference>
<dbReference type="InterPro" id="IPR002500">
    <property type="entry name" value="PAPS_reduct_dom"/>
</dbReference>
<dbReference type="InterPro" id="IPR014729">
    <property type="entry name" value="Rossmann-like_a/b/a_fold"/>
</dbReference>
<dbReference type="InterPro" id="IPR011784">
    <property type="entry name" value="SO4_adenylTrfase_ssu"/>
</dbReference>
<dbReference type="InterPro" id="IPR050128">
    <property type="entry name" value="Sulfate_adenylyltrnsfr_sub2"/>
</dbReference>
<dbReference type="NCBIfam" id="TIGR02039">
    <property type="entry name" value="CysD"/>
    <property type="match status" value="1"/>
</dbReference>
<dbReference type="NCBIfam" id="NF003587">
    <property type="entry name" value="PRK05253.1"/>
    <property type="match status" value="1"/>
</dbReference>
<dbReference type="NCBIfam" id="NF009214">
    <property type="entry name" value="PRK12563.1"/>
    <property type="match status" value="1"/>
</dbReference>
<dbReference type="PANTHER" id="PTHR43196">
    <property type="entry name" value="SULFATE ADENYLYLTRANSFERASE SUBUNIT 2"/>
    <property type="match status" value="1"/>
</dbReference>
<dbReference type="PANTHER" id="PTHR43196:SF1">
    <property type="entry name" value="SULFATE ADENYLYLTRANSFERASE SUBUNIT 2"/>
    <property type="match status" value="1"/>
</dbReference>
<dbReference type="Pfam" id="PF01507">
    <property type="entry name" value="PAPS_reduct"/>
    <property type="match status" value="1"/>
</dbReference>
<dbReference type="PIRSF" id="PIRSF002936">
    <property type="entry name" value="CysDAde_trans"/>
    <property type="match status" value="1"/>
</dbReference>
<dbReference type="SUPFAM" id="SSF52402">
    <property type="entry name" value="Adenine nucleotide alpha hydrolases-like"/>
    <property type="match status" value="1"/>
</dbReference>
<keyword id="KW-0067">ATP-binding</keyword>
<keyword id="KW-0547">Nucleotide-binding</keyword>
<keyword id="KW-0548">Nucleotidyltransferase</keyword>
<keyword id="KW-0808">Transferase</keyword>
<evidence type="ECO:0000255" key="1">
    <source>
        <dbReference type="HAMAP-Rule" id="MF_00064"/>
    </source>
</evidence>